<dbReference type="EMBL" id="AM421808">
    <property type="protein sequence ID" value="CAM10504.1"/>
    <property type="molecule type" value="Genomic_DNA"/>
</dbReference>
<dbReference type="RefSeq" id="WP_002213273.1">
    <property type="nucleotide sequence ID" value="NC_008767.1"/>
</dbReference>
<dbReference type="SMR" id="A1KUG1"/>
<dbReference type="KEGG" id="nmc:NMC1274"/>
<dbReference type="HOGENOM" id="CLU_057596_1_0_4"/>
<dbReference type="Proteomes" id="UP000002286">
    <property type="component" value="Chromosome"/>
</dbReference>
<dbReference type="GO" id="GO:0005829">
    <property type="term" value="C:cytosol"/>
    <property type="evidence" value="ECO:0007669"/>
    <property type="project" value="TreeGrafter"/>
</dbReference>
<dbReference type="Gene3D" id="3.40.1740.10">
    <property type="entry name" value="VC0467-like"/>
    <property type="match status" value="1"/>
</dbReference>
<dbReference type="HAMAP" id="MF_00758">
    <property type="entry name" value="UPF0301"/>
    <property type="match status" value="1"/>
</dbReference>
<dbReference type="InterPro" id="IPR003774">
    <property type="entry name" value="AlgH-like"/>
</dbReference>
<dbReference type="NCBIfam" id="NF001266">
    <property type="entry name" value="PRK00228.1-1"/>
    <property type="match status" value="1"/>
</dbReference>
<dbReference type="PANTHER" id="PTHR30327">
    <property type="entry name" value="UNCHARACTERIZED PROTEIN YQGE"/>
    <property type="match status" value="1"/>
</dbReference>
<dbReference type="PANTHER" id="PTHR30327:SF1">
    <property type="entry name" value="UPF0301 PROTEIN YQGE"/>
    <property type="match status" value="1"/>
</dbReference>
<dbReference type="Pfam" id="PF02622">
    <property type="entry name" value="DUF179"/>
    <property type="match status" value="1"/>
</dbReference>
<dbReference type="SUPFAM" id="SSF143456">
    <property type="entry name" value="VC0467-like"/>
    <property type="match status" value="1"/>
</dbReference>
<comment type="similarity">
    <text evidence="1">Belongs to the UPF0301 (AlgH) family.</text>
</comment>
<accession>A1KUG1</accession>
<protein>
    <recommendedName>
        <fullName evidence="1">UPF0301 protein NMC1274</fullName>
    </recommendedName>
</protein>
<gene>
    <name type="ordered locus">NMC1274</name>
</gene>
<sequence length="182" mass="19851">MNLSNHFLVAMPDMEDAFFSQSVVYICKHDEDGALGIAINKPSPITMDMIFSATGKNIPMRMQHDSVMMGGPVQVERGYVVHTPIGNWQSSIGVSDNIALTSSRDVIENISREGAVDKALISIGYSSWGKGQLERELADNAWLTVPADEHILFDIPYEHRYAAAFAKLGIDPLALFSGAGHA</sequence>
<name>Y1274_NEIMF</name>
<evidence type="ECO:0000255" key="1">
    <source>
        <dbReference type="HAMAP-Rule" id="MF_00758"/>
    </source>
</evidence>
<reference key="1">
    <citation type="journal article" date="2007" name="PLoS Genet.">
        <title>Meningococcal genetic variation mechanisms viewed through comparative analysis of serogroup C strain FAM18.</title>
        <authorList>
            <person name="Bentley S.D."/>
            <person name="Vernikos G.S."/>
            <person name="Snyder L.A.S."/>
            <person name="Churcher C."/>
            <person name="Arrowsmith C."/>
            <person name="Chillingworth T."/>
            <person name="Cronin A."/>
            <person name="Davis P.H."/>
            <person name="Holroyd N.E."/>
            <person name="Jagels K."/>
            <person name="Maddison M."/>
            <person name="Moule S."/>
            <person name="Rabbinowitsch E."/>
            <person name="Sharp S."/>
            <person name="Unwin L."/>
            <person name="Whitehead S."/>
            <person name="Quail M.A."/>
            <person name="Achtman M."/>
            <person name="Barrell B.G."/>
            <person name="Saunders N.J."/>
            <person name="Parkhill J."/>
        </authorList>
    </citation>
    <scope>NUCLEOTIDE SEQUENCE [LARGE SCALE GENOMIC DNA]</scope>
    <source>
        <strain>ATCC 700532 / DSM 15464 / FAM18</strain>
    </source>
</reference>
<proteinExistence type="inferred from homology"/>
<organism>
    <name type="scientific">Neisseria meningitidis serogroup C / serotype 2a (strain ATCC 700532 / DSM 15464 / FAM18)</name>
    <dbReference type="NCBI Taxonomy" id="272831"/>
    <lineage>
        <taxon>Bacteria</taxon>
        <taxon>Pseudomonadati</taxon>
        <taxon>Pseudomonadota</taxon>
        <taxon>Betaproteobacteria</taxon>
        <taxon>Neisseriales</taxon>
        <taxon>Neisseriaceae</taxon>
        <taxon>Neisseria</taxon>
    </lineage>
</organism>
<feature type="chain" id="PRO_1000046667" description="UPF0301 protein NMC1274">
    <location>
        <begin position="1"/>
        <end position="182"/>
    </location>
</feature>